<dbReference type="EC" id="4.2.1.8" evidence="1"/>
<dbReference type="EMBL" id="BX571859">
    <property type="protein sequence ID" value="CAE12465.1"/>
    <property type="molecule type" value="Genomic_DNA"/>
</dbReference>
<dbReference type="RefSeq" id="WP_011144572.1">
    <property type="nucleotide sequence ID" value="NC_005126.1"/>
</dbReference>
<dbReference type="SMR" id="Q7N9Y1"/>
<dbReference type="STRING" id="243265.plu0170"/>
<dbReference type="GeneID" id="48846467"/>
<dbReference type="KEGG" id="plu:plu0170"/>
<dbReference type="eggNOG" id="COG1312">
    <property type="taxonomic scope" value="Bacteria"/>
</dbReference>
<dbReference type="HOGENOM" id="CLU_058621_2_0_6"/>
<dbReference type="OrthoDB" id="9780250at2"/>
<dbReference type="UniPathway" id="UPA00246"/>
<dbReference type="Proteomes" id="UP000002514">
    <property type="component" value="Chromosome"/>
</dbReference>
<dbReference type="GO" id="GO:0008198">
    <property type="term" value="F:ferrous iron binding"/>
    <property type="evidence" value="ECO:0007669"/>
    <property type="project" value="TreeGrafter"/>
</dbReference>
<dbReference type="GO" id="GO:0030145">
    <property type="term" value="F:manganese ion binding"/>
    <property type="evidence" value="ECO:0007669"/>
    <property type="project" value="TreeGrafter"/>
</dbReference>
<dbReference type="GO" id="GO:0008927">
    <property type="term" value="F:mannonate dehydratase activity"/>
    <property type="evidence" value="ECO:0007669"/>
    <property type="project" value="UniProtKB-UniRule"/>
</dbReference>
<dbReference type="GO" id="GO:0042840">
    <property type="term" value="P:D-glucuronate catabolic process"/>
    <property type="evidence" value="ECO:0007669"/>
    <property type="project" value="TreeGrafter"/>
</dbReference>
<dbReference type="FunFam" id="3.20.20.150:FF:000010">
    <property type="entry name" value="Mannonate dehydratase"/>
    <property type="match status" value="1"/>
</dbReference>
<dbReference type="Gene3D" id="3.20.20.150">
    <property type="entry name" value="Divalent-metal-dependent TIM barrel enzymes"/>
    <property type="match status" value="1"/>
</dbReference>
<dbReference type="HAMAP" id="MF_00106">
    <property type="entry name" value="UxuA"/>
    <property type="match status" value="1"/>
</dbReference>
<dbReference type="InterPro" id="IPR004628">
    <property type="entry name" value="Man_deHydtase"/>
</dbReference>
<dbReference type="InterPro" id="IPR036237">
    <property type="entry name" value="Xyl_isomerase-like_sf"/>
</dbReference>
<dbReference type="NCBIfam" id="NF003027">
    <property type="entry name" value="PRK03906.1"/>
    <property type="match status" value="1"/>
</dbReference>
<dbReference type="NCBIfam" id="TIGR00695">
    <property type="entry name" value="uxuA"/>
    <property type="match status" value="1"/>
</dbReference>
<dbReference type="PANTHER" id="PTHR30387">
    <property type="entry name" value="MANNONATE DEHYDRATASE"/>
    <property type="match status" value="1"/>
</dbReference>
<dbReference type="PANTHER" id="PTHR30387:SF2">
    <property type="entry name" value="MANNONATE DEHYDRATASE"/>
    <property type="match status" value="1"/>
</dbReference>
<dbReference type="Pfam" id="PF03786">
    <property type="entry name" value="UxuA"/>
    <property type="match status" value="1"/>
</dbReference>
<dbReference type="PIRSF" id="PIRSF016049">
    <property type="entry name" value="Man_dehyd"/>
    <property type="match status" value="1"/>
</dbReference>
<dbReference type="SUPFAM" id="SSF51658">
    <property type="entry name" value="Xylose isomerase-like"/>
    <property type="match status" value="1"/>
</dbReference>
<name>UXUA_PHOLL</name>
<sequence>MEQTWRWFGPNDPVSLDDIRQAGATGIVTALHHIPNGHIWNKDEILARKTLIENKGLIWSVVESVPVHEEIKTRTGHYSQWINNYKTSLKNLAECGIDTVCYNFMPVLDWTRTDLEYSLPDGSKALRFDQIAFAAFEIYILKRPNAEADYTVEEQAQAKVYHDNMSAADIKKLTTNIIAGLPGAEEGYTLAEFQAQLDRYKDITRDKLREHLAYFLHQIVPVCEEYGLRLAIHPDDPPRPILGLPRIISTIEDIEWLTTIEPSPANGITMCTGSYGVRSDNDLVEIIKHYGNRIYFTHLRSTQREENSKTFHEATHLAGDVDMYNVVMEILREEYRRKKVGDNRLIPMRPDHGHQIIDDLKKQTNPGYSCIGRLKGLAEIRGLELGLRRAFFENK</sequence>
<comment type="function">
    <text evidence="1">Catalyzes the dehydration of D-mannonate.</text>
</comment>
<comment type="catalytic activity">
    <reaction evidence="1">
        <text>D-mannonate = 2-dehydro-3-deoxy-D-gluconate + H2O</text>
        <dbReference type="Rhea" id="RHEA:20097"/>
        <dbReference type="ChEBI" id="CHEBI:15377"/>
        <dbReference type="ChEBI" id="CHEBI:17767"/>
        <dbReference type="ChEBI" id="CHEBI:57990"/>
        <dbReference type="EC" id="4.2.1.8"/>
    </reaction>
</comment>
<comment type="cofactor">
    <cofactor evidence="1">
        <name>Fe(2+)</name>
        <dbReference type="ChEBI" id="CHEBI:29033"/>
    </cofactor>
    <cofactor evidence="1">
        <name>Mn(2+)</name>
        <dbReference type="ChEBI" id="CHEBI:29035"/>
    </cofactor>
</comment>
<comment type="pathway">
    <text evidence="1">Carbohydrate metabolism; pentose and glucuronate interconversion.</text>
</comment>
<comment type="similarity">
    <text evidence="1">Belongs to the mannonate dehydratase family.</text>
</comment>
<protein>
    <recommendedName>
        <fullName evidence="1">Mannonate dehydratase</fullName>
        <ecNumber evidence="1">4.2.1.8</ecNumber>
    </recommendedName>
    <alternativeName>
        <fullName evidence="1">D-mannonate hydro-lyase</fullName>
    </alternativeName>
</protein>
<organism>
    <name type="scientific">Photorhabdus laumondii subsp. laumondii (strain DSM 15139 / CIP 105565 / TT01)</name>
    <name type="common">Photorhabdus luminescens subsp. laumondii</name>
    <dbReference type="NCBI Taxonomy" id="243265"/>
    <lineage>
        <taxon>Bacteria</taxon>
        <taxon>Pseudomonadati</taxon>
        <taxon>Pseudomonadota</taxon>
        <taxon>Gammaproteobacteria</taxon>
        <taxon>Enterobacterales</taxon>
        <taxon>Morganellaceae</taxon>
        <taxon>Photorhabdus</taxon>
    </lineage>
</organism>
<accession>Q7N9Y1</accession>
<proteinExistence type="inferred from homology"/>
<keyword id="KW-0408">Iron</keyword>
<keyword id="KW-0456">Lyase</keyword>
<keyword id="KW-0464">Manganese</keyword>
<keyword id="KW-1185">Reference proteome</keyword>
<reference key="1">
    <citation type="journal article" date="2003" name="Nat. Biotechnol.">
        <title>The genome sequence of the entomopathogenic bacterium Photorhabdus luminescens.</title>
        <authorList>
            <person name="Duchaud E."/>
            <person name="Rusniok C."/>
            <person name="Frangeul L."/>
            <person name="Buchrieser C."/>
            <person name="Givaudan A."/>
            <person name="Taourit S."/>
            <person name="Bocs S."/>
            <person name="Boursaux-Eude C."/>
            <person name="Chandler M."/>
            <person name="Charles J.-F."/>
            <person name="Dassa E."/>
            <person name="Derose R."/>
            <person name="Derzelle S."/>
            <person name="Freyssinet G."/>
            <person name="Gaudriault S."/>
            <person name="Medigue C."/>
            <person name="Lanois A."/>
            <person name="Powell K."/>
            <person name="Siguier P."/>
            <person name="Vincent R."/>
            <person name="Wingate V."/>
            <person name="Zouine M."/>
            <person name="Glaser P."/>
            <person name="Boemare N."/>
            <person name="Danchin A."/>
            <person name="Kunst F."/>
        </authorList>
    </citation>
    <scope>NUCLEOTIDE SEQUENCE [LARGE SCALE GENOMIC DNA]</scope>
    <source>
        <strain>DSM 15139 / CIP 105565 / TT01</strain>
    </source>
</reference>
<feature type="chain" id="PRO_0000170679" description="Mannonate dehydratase">
    <location>
        <begin position="1"/>
        <end position="395"/>
    </location>
</feature>
<evidence type="ECO:0000255" key="1">
    <source>
        <dbReference type="HAMAP-Rule" id="MF_00106"/>
    </source>
</evidence>
<gene>
    <name evidence="1" type="primary">uxuA</name>
    <name type="ordered locus">plu0170</name>
</gene>